<reference key="1">
    <citation type="journal article" date="1995" name="DNA Res.">
        <title>Sequence analysis of the genome of the unicellular cyanobacterium Synechocystis sp. strain PCC6803. I. Sequence features in the 1 Mb region from map positions 64% to 92% of the genome.</title>
        <authorList>
            <person name="Kaneko T."/>
            <person name="Tanaka A."/>
            <person name="Sato S."/>
            <person name="Kotani H."/>
            <person name="Sazuka T."/>
            <person name="Miyajima N."/>
            <person name="Sugiura M."/>
            <person name="Tabata S."/>
        </authorList>
    </citation>
    <scope>NUCLEOTIDE SEQUENCE [LARGE SCALE GENOMIC DNA]</scope>
    <source>
        <strain>ATCC 27184 / PCC 6803 / N-1</strain>
    </source>
</reference>
<reference key="2">
    <citation type="journal article" date="1996" name="DNA Res.">
        <title>Sequence analysis of the genome of the unicellular cyanobacterium Synechocystis sp. strain PCC6803. II. Sequence determination of the entire genome and assignment of potential protein-coding regions.</title>
        <authorList>
            <person name="Kaneko T."/>
            <person name="Sato S."/>
            <person name="Kotani H."/>
            <person name="Tanaka A."/>
            <person name="Asamizu E."/>
            <person name="Nakamura Y."/>
            <person name="Miyajima N."/>
            <person name="Hirosawa M."/>
            <person name="Sugiura M."/>
            <person name="Sasamoto S."/>
            <person name="Kimura T."/>
            <person name="Hosouchi T."/>
            <person name="Matsuno A."/>
            <person name="Muraki A."/>
            <person name="Nakazaki N."/>
            <person name="Naruo K."/>
            <person name="Okumura S."/>
            <person name="Shimpo S."/>
            <person name="Takeuchi C."/>
            <person name="Wada T."/>
            <person name="Watanabe A."/>
            <person name="Yamada M."/>
            <person name="Yasuda M."/>
            <person name="Tabata S."/>
        </authorList>
    </citation>
    <scope>NUCLEOTIDE SEQUENCE [LARGE SCALE GENOMIC DNA]</scope>
    <source>
        <strain>ATCC 27184 / PCC 6803 / Kazusa</strain>
    </source>
</reference>
<keyword id="KW-0169">Cobalamin biosynthesis</keyword>
<keyword id="KW-0489">Methyltransferase</keyword>
<keyword id="KW-0627">Porphyrin biosynthesis</keyword>
<keyword id="KW-1185">Reference proteome</keyword>
<keyword id="KW-0949">S-adenosyl-L-methionine</keyword>
<keyword id="KW-0808">Transferase</keyword>
<evidence type="ECO:0000250" key="1">
    <source>
        <dbReference type="UniProtKB" id="P21631"/>
    </source>
</evidence>
<evidence type="ECO:0000305" key="2"/>
<dbReference type="EC" id="2.1.1.107" evidence="1"/>
<dbReference type="EMBL" id="BA000022">
    <property type="protein sequence ID" value="BAA10394.1"/>
    <property type="molecule type" value="Genomic_DNA"/>
</dbReference>
<dbReference type="PIR" id="S76548">
    <property type="entry name" value="S76548"/>
</dbReference>
<dbReference type="SMR" id="Q55749"/>
<dbReference type="FunCoup" id="Q55749">
    <property type="interactions" value="404"/>
</dbReference>
<dbReference type="STRING" id="1148.gene:10499895"/>
<dbReference type="PaxDb" id="1148-1001660"/>
<dbReference type="EnsemblBacteria" id="BAA10394">
    <property type="protein sequence ID" value="BAA10394"/>
    <property type="gene ID" value="BAA10394"/>
</dbReference>
<dbReference type="KEGG" id="syn:sll0378"/>
<dbReference type="eggNOG" id="COG0007">
    <property type="taxonomic scope" value="Bacteria"/>
</dbReference>
<dbReference type="InParanoid" id="Q55749"/>
<dbReference type="PhylomeDB" id="Q55749"/>
<dbReference type="UniPathway" id="UPA00148">
    <property type="reaction ID" value="UER00211"/>
</dbReference>
<dbReference type="UniPathway" id="UPA00262">
    <property type="reaction ID" value="UER00211"/>
</dbReference>
<dbReference type="Proteomes" id="UP000001425">
    <property type="component" value="Chromosome"/>
</dbReference>
<dbReference type="GO" id="GO:0004851">
    <property type="term" value="F:uroporphyrin-III C-methyltransferase activity"/>
    <property type="evidence" value="ECO:0000318"/>
    <property type="project" value="GO_Central"/>
</dbReference>
<dbReference type="GO" id="GO:0009236">
    <property type="term" value="P:cobalamin biosynthetic process"/>
    <property type="evidence" value="ECO:0007669"/>
    <property type="project" value="UniProtKB-UniPathway"/>
</dbReference>
<dbReference type="GO" id="GO:0032259">
    <property type="term" value="P:methylation"/>
    <property type="evidence" value="ECO:0007669"/>
    <property type="project" value="UniProtKB-KW"/>
</dbReference>
<dbReference type="GO" id="GO:0019354">
    <property type="term" value="P:siroheme biosynthetic process"/>
    <property type="evidence" value="ECO:0000318"/>
    <property type="project" value="GO_Central"/>
</dbReference>
<dbReference type="CDD" id="cd11642">
    <property type="entry name" value="SUMT"/>
    <property type="match status" value="1"/>
</dbReference>
<dbReference type="FunFam" id="3.30.950.10:FF:000001">
    <property type="entry name" value="Siroheme synthase"/>
    <property type="match status" value="1"/>
</dbReference>
<dbReference type="FunFam" id="3.40.1010.10:FF:000001">
    <property type="entry name" value="Siroheme synthase"/>
    <property type="match status" value="1"/>
</dbReference>
<dbReference type="Gene3D" id="3.40.1010.10">
    <property type="entry name" value="Cobalt-precorrin-4 Transmethylase, Domain 1"/>
    <property type="match status" value="1"/>
</dbReference>
<dbReference type="Gene3D" id="3.30.950.10">
    <property type="entry name" value="Methyltransferase, Cobalt-precorrin-4 Transmethylase, Domain 2"/>
    <property type="match status" value="1"/>
</dbReference>
<dbReference type="InterPro" id="IPR000878">
    <property type="entry name" value="4pyrrol_Mease"/>
</dbReference>
<dbReference type="InterPro" id="IPR035996">
    <property type="entry name" value="4pyrrol_Methylase_sf"/>
</dbReference>
<dbReference type="InterPro" id="IPR014777">
    <property type="entry name" value="4pyrrole_Mease_sub1"/>
</dbReference>
<dbReference type="InterPro" id="IPR014776">
    <property type="entry name" value="4pyrrole_Mease_sub2"/>
</dbReference>
<dbReference type="InterPro" id="IPR006366">
    <property type="entry name" value="CobA/CysG_C"/>
</dbReference>
<dbReference type="InterPro" id="IPR050161">
    <property type="entry name" value="Siro_Cobalamin_biosynth"/>
</dbReference>
<dbReference type="InterPro" id="IPR003043">
    <property type="entry name" value="Uropor_MeTrfase_CS"/>
</dbReference>
<dbReference type="NCBIfam" id="TIGR01469">
    <property type="entry name" value="cobA_cysG_Cterm"/>
    <property type="match status" value="1"/>
</dbReference>
<dbReference type="NCBIfam" id="NF004790">
    <property type="entry name" value="PRK06136.1"/>
    <property type="match status" value="1"/>
</dbReference>
<dbReference type="PANTHER" id="PTHR45790:SF3">
    <property type="entry name" value="S-ADENOSYL-L-METHIONINE-DEPENDENT UROPORPHYRINOGEN III METHYLTRANSFERASE, CHLOROPLASTIC"/>
    <property type="match status" value="1"/>
</dbReference>
<dbReference type="PANTHER" id="PTHR45790">
    <property type="entry name" value="SIROHEME SYNTHASE-RELATED"/>
    <property type="match status" value="1"/>
</dbReference>
<dbReference type="Pfam" id="PF00590">
    <property type="entry name" value="TP_methylase"/>
    <property type="match status" value="1"/>
</dbReference>
<dbReference type="SUPFAM" id="SSF53790">
    <property type="entry name" value="Tetrapyrrole methylase"/>
    <property type="match status" value="1"/>
</dbReference>
<dbReference type="PROSITE" id="PS00839">
    <property type="entry name" value="SUMT_1"/>
    <property type="match status" value="1"/>
</dbReference>
<dbReference type="PROSITE" id="PS00840">
    <property type="entry name" value="SUMT_2"/>
    <property type="match status" value="1"/>
</dbReference>
<protein>
    <recommendedName>
        <fullName>Uroporphyrinogen-III C-methyltransferase</fullName>
        <shortName>Urogen III methylase</shortName>
        <ecNumber evidence="1">2.1.1.107</ecNumber>
    </recommendedName>
    <alternativeName>
        <fullName>S-adenosyl-L-methionine:uroporphyrinogen III methyltransferase</fullName>
        <shortName>SUMT</shortName>
    </alternativeName>
    <alternativeName>
        <fullName>Uroporphyrinogen III methylase</fullName>
        <shortName>UROM</shortName>
    </alternativeName>
</protein>
<feature type="chain" id="PRO_0000150375" description="Uroporphyrinogen-III C-methyltransferase">
    <location>
        <begin position="1"/>
        <end position="263"/>
    </location>
</feature>
<feature type="binding site" evidence="1">
    <location>
        <position position="20"/>
    </location>
    <ligand>
        <name>S-adenosyl-L-homocysteine</name>
        <dbReference type="ChEBI" id="CHEBI:57856"/>
    </ligand>
</feature>
<feature type="binding site" evidence="1">
    <location>
        <begin position="96"/>
        <end position="98"/>
    </location>
    <ligand>
        <name>S-adenosyl-L-homocysteine</name>
        <dbReference type="ChEBI" id="CHEBI:57856"/>
    </ligand>
</feature>
<feature type="binding site" evidence="1">
    <location>
        <begin position="126"/>
        <end position="127"/>
    </location>
    <ligand>
        <name>S-adenosyl-L-homocysteine</name>
        <dbReference type="ChEBI" id="CHEBI:57856"/>
    </ligand>
</feature>
<feature type="binding site" evidence="1">
    <location>
        <position position="180"/>
    </location>
    <ligand>
        <name>S-adenosyl-L-homocysteine</name>
        <dbReference type="ChEBI" id="CHEBI:57856"/>
    </ligand>
</feature>
<feature type="binding site" evidence="1">
    <location>
        <position position="237"/>
    </location>
    <ligand>
        <name>S-adenosyl-L-homocysteine</name>
        <dbReference type="ChEBI" id="CHEBI:57856"/>
    </ligand>
</feature>
<gene>
    <name type="primary">cobA</name>
    <name type="ordered locus">sll0378</name>
</gene>
<sequence length="263" mass="27833">MVVRLQNGLMGKVYLVGAGPGDPGLITVKGKTLLENAEAVVYDALVSTAILAMVNPQAELIDAGKRRGRHTKLQSETTQLLAQLAEKHAVVVRLKGGDPFIFGRGGEEMEDLVKAGIEVEVVPGITAGIAAPAYAQIPLTHRAYSSSVTFVTGHESAGKYRPEVNWAAIAKGSETIVIYMGVYSLATILPQLMLAGLGEDTPIALIRWGTCPEQQKLVGTFATILAQIEVENFQAPAIVVIGAVVNYPANLRQQLAPILGGVN</sequence>
<name>SUMT_SYNY3</name>
<accession>Q55749</accession>
<comment type="function">
    <text evidence="1">Catalyzes the two successive C-2 and C-7 methylation reactions involved in the conversion of uroporphyrinogen III to precorrin-2 via the intermediate formation of precorrin-1. It is a step in the biosynthesis of both cobalamin (vitamin B12) and siroheme.</text>
</comment>
<comment type="catalytic activity">
    <reaction evidence="1">
        <text>uroporphyrinogen III + 2 S-adenosyl-L-methionine = precorrin-2 + 2 S-adenosyl-L-homocysteine + H(+)</text>
        <dbReference type="Rhea" id="RHEA:32459"/>
        <dbReference type="ChEBI" id="CHEBI:15378"/>
        <dbReference type="ChEBI" id="CHEBI:57308"/>
        <dbReference type="ChEBI" id="CHEBI:57856"/>
        <dbReference type="ChEBI" id="CHEBI:58827"/>
        <dbReference type="ChEBI" id="CHEBI:59789"/>
        <dbReference type="EC" id="2.1.1.107"/>
    </reaction>
    <physiologicalReaction direction="left-to-right" evidence="1">
        <dbReference type="Rhea" id="RHEA:32460"/>
    </physiologicalReaction>
</comment>
<comment type="pathway">
    <text evidence="1">Cofactor biosynthesis; adenosylcobalamin biosynthesis; precorrin-2 from uroporphyrinogen III: step 1/1.</text>
</comment>
<comment type="pathway">
    <text evidence="1">Porphyrin-containing compound metabolism; siroheme biosynthesis; precorrin-2 from uroporphyrinogen III: step 1/1.</text>
</comment>
<comment type="similarity">
    <text evidence="2">Belongs to the precorrin methyltransferase family.</text>
</comment>
<proteinExistence type="inferred from homology"/>
<organism>
    <name type="scientific">Synechocystis sp. (strain ATCC 27184 / PCC 6803 / Kazusa)</name>
    <dbReference type="NCBI Taxonomy" id="1111708"/>
    <lineage>
        <taxon>Bacteria</taxon>
        <taxon>Bacillati</taxon>
        <taxon>Cyanobacteriota</taxon>
        <taxon>Cyanophyceae</taxon>
        <taxon>Synechococcales</taxon>
        <taxon>Merismopediaceae</taxon>
        <taxon>Synechocystis</taxon>
    </lineage>
</organism>